<reference key="1">
    <citation type="journal article" date="1982" name="Nucleic Acids Res.">
        <title>The ovalbumin gene family: complete sequence and structure of the Y gene.</title>
        <authorList>
            <person name="Heilig R."/>
            <person name="Muraskowsky R."/>
            <person name="Kloepfer C."/>
            <person name="Mandel J.-L."/>
        </authorList>
    </citation>
    <scope>NUCLEOTIDE SEQUENCE [GENOMIC DNA]</scope>
</reference>
<reference key="2">
    <citation type="journal article" date="2014" name="J. Agric. Food Chem.">
        <title>Differential abundance of egg white proteins in laying hens treated with corticosterone.</title>
        <authorList>
            <person name="Kim J."/>
            <person name="Choi Y.H."/>
        </authorList>
    </citation>
    <scope>PROTEIN SEQUENCE OF 10-21; 20-48; 56-86; 105-124; 110-124; 123-137; 143-153; 186-196; 229-256; 353-373; 362-373 AND 372-385</scope>
    <scope>TISSUE SPECIFICITY</scope>
    <scope>INDUCTION</scope>
    <scope>IDENTIFICATION BY MASS SPECTROMETRY</scope>
    <source>
        <tissue evidence="5">Egg white</tissue>
    </source>
</reference>
<reference key="3">
    <citation type="journal article" date="2006" name="Biosci. Biotechnol. Biochem.">
        <title>Ovalbumin-related gene Y protein bears carbohydrate chains of the ovomucoid type.</title>
        <authorList>
            <person name="Hirose J."/>
            <person name="Doi Y."/>
            <person name="Kitabatake N."/>
            <person name="Narita H."/>
        </authorList>
    </citation>
    <scope>PROTEIN SEQUENCE OF 56-63 AND 156-164</scope>
    <scope>SUBCELLULAR LOCATION</scope>
    <scope>TISSUE SPECIFICITY</scope>
    <scope>GLYCOSYLATION</scope>
    <scope>BLOCKAGE OF N-TERMINUS</scope>
    <source>
        <tissue>Egg white</tissue>
    </source>
</reference>
<gene>
    <name type="primary">SERPINB14B</name>
    <name type="synonym">Y</name>
</gene>
<keyword id="KW-0903">Direct protein sequencing</keyword>
<keyword id="KW-1015">Disulfide bond</keyword>
<keyword id="KW-0325">Glycoprotein</keyword>
<keyword id="KW-0654">Proteoglycan</keyword>
<keyword id="KW-1185">Reference proteome</keyword>
<keyword id="KW-0964">Secreted</keyword>
<organism>
    <name type="scientific">Gallus gallus</name>
    <name type="common">Chicken</name>
    <dbReference type="NCBI Taxonomy" id="9031"/>
    <lineage>
        <taxon>Eukaryota</taxon>
        <taxon>Metazoa</taxon>
        <taxon>Chordata</taxon>
        <taxon>Craniata</taxon>
        <taxon>Vertebrata</taxon>
        <taxon>Euteleostomi</taxon>
        <taxon>Archelosauria</taxon>
        <taxon>Archosauria</taxon>
        <taxon>Dinosauria</taxon>
        <taxon>Saurischia</taxon>
        <taxon>Theropoda</taxon>
        <taxon>Coelurosauria</taxon>
        <taxon>Aves</taxon>
        <taxon>Neognathae</taxon>
        <taxon>Galloanserae</taxon>
        <taxon>Galliformes</taxon>
        <taxon>Phasianidae</taxon>
        <taxon>Phasianinae</taxon>
        <taxon>Gallus</taxon>
    </lineage>
</organism>
<feature type="chain" id="PRO_0000094131" description="Ovalbumin-related protein Y">
    <location>
        <begin position="1"/>
        <end position="388"/>
    </location>
</feature>
<feature type="site" description="Reactive bond homolog">
    <location>
        <begin position="353"/>
        <end position="354"/>
    </location>
</feature>
<feature type="glycosylation site" description="N-linked (GlcNAc...) asparagine" evidence="2">
    <location>
        <position position="95"/>
    </location>
</feature>
<feature type="glycosylation site" description="N-linked (GlcNAc...) asparagine" evidence="2">
    <location>
        <position position="215"/>
    </location>
</feature>
<feature type="glycosylation site" description="N-linked (GlcNAc...) asparagine" evidence="2">
    <location>
        <position position="293"/>
    </location>
</feature>
<feature type="glycosylation site" description="N-linked (GlcNAc...) asparagine" evidence="2">
    <location>
        <position position="312"/>
    </location>
</feature>
<feature type="disulfide bond" evidence="1">
    <location>
        <begin position="74"/>
        <end position="121"/>
    </location>
</feature>
<protein>
    <recommendedName>
        <fullName>Ovalbumin-related protein Y</fullName>
    </recommendedName>
    <alternativeName>
        <fullName>Gene Y protein</fullName>
    </alternativeName>
</protein>
<comment type="subcellular location">
    <subcellularLocation>
        <location evidence="3">Secreted</location>
    </subcellularLocation>
</comment>
<comment type="tissue specificity">
    <text evidence="3 4">Major protein of egg white (PubMed:16428832, PubMed:25436390). Expressed in the magnum of the oviduct (at protein level) (PubMed:25436390).</text>
</comment>
<comment type="induction">
    <text evidence="4">Down-regulated by dietary stress. Decreased expression at day 14 in the magnum of the oviduct in the corticosterone-fed laying hens.</text>
</comment>
<comment type="PTM">
    <text evidence="3">N-glycosylated on at least two Asn residues by ovomucoid type carbohydrate units.</text>
</comment>
<comment type="PTM">
    <text>The N-terminus is blocked.</text>
</comment>
<comment type="similarity">
    <text evidence="6">Belongs to the serpin family. Ov-serpin subfamily.</text>
</comment>
<evidence type="ECO:0000250" key="1"/>
<evidence type="ECO:0000255" key="2"/>
<evidence type="ECO:0000269" key="3">
    <source>
    </source>
</evidence>
<evidence type="ECO:0000269" key="4">
    <source>
    </source>
</evidence>
<evidence type="ECO:0000303" key="5">
    <source>
    </source>
</evidence>
<evidence type="ECO:0000305" key="6"/>
<name>OVALY_CHICK</name>
<accession>P01014</accession>
<dbReference type="EMBL" id="J00922">
    <property type="protein sequence ID" value="AAA68882.1"/>
    <property type="molecule type" value="Genomic_DNA"/>
</dbReference>
<dbReference type="PIR" id="A01244">
    <property type="entry name" value="DYCH"/>
</dbReference>
<dbReference type="RefSeq" id="NP_001026172.1">
    <property type="nucleotide sequence ID" value="NM_001031001.1"/>
</dbReference>
<dbReference type="SMR" id="P01014"/>
<dbReference type="FunCoup" id="P01014">
    <property type="interactions" value="58"/>
</dbReference>
<dbReference type="STRING" id="9031.ENSGALP00000047796"/>
<dbReference type="MEROPS" id="I04.958"/>
<dbReference type="GlyCosmos" id="P01014">
    <property type="glycosylation" value="4 sites, No reported glycans"/>
</dbReference>
<dbReference type="GlyGen" id="P01014">
    <property type="glycosylation" value="4 sites"/>
</dbReference>
<dbReference type="PaxDb" id="9031-ENSGALP00000020967"/>
<dbReference type="GeneID" id="420897"/>
<dbReference type="KEGG" id="gga:420897"/>
<dbReference type="CTD" id="420897"/>
<dbReference type="VEuPathDB" id="HostDB:geneid_420897"/>
<dbReference type="eggNOG" id="KOG2392">
    <property type="taxonomic scope" value="Eukaryota"/>
</dbReference>
<dbReference type="InParanoid" id="P01014"/>
<dbReference type="OMA" id="EYIHRSF"/>
<dbReference type="OrthoDB" id="671595at2759"/>
<dbReference type="PhylomeDB" id="P01014"/>
<dbReference type="PRO" id="PR:P01014"/>
<dbReference type="Proteomes" id="UP000000539">
    <property type="component" value="Unassembled WGS sequence"/>
</dbReference>
<dbReference type="GO" id="GO:0005576">
    <property type="term" value="C:extracellular region"/>
    <property type="evidence" value="ECO:0000314"/>
    <property type="project" value="UniProtKB"/>
</dbReference>
<dbReference type="GO" id="GO:0005615">
    <property type="term" value="C:extracellular space"/>
    <property type="evidence" value="ECO:0000318"/>
    <property type="project" value="GO_Central"/>
</dbReference>
<dbReference type="GO" id="GO:0004867">
    <property type="term" value="F:serine-type endopeptidase inhibitor activity"/>
    <property type="evidence" value="ECO:0000318"/>
    <property type="project" value="GO_Central"/>
</dbReference>
<dbReference type="CDD" id="cd02059">
    <property type="entry name" value="serpinB14_OVA"/>
    <property type="match status" value="1"/>
</dbReference>
<dbReference type="FunFam" id="3.30.497.10:FF:000001">
    <property type="entry name" value="Serine protease inhibitor"/>
    <property type="match status" value="1"/>
</dbReference>
<dbReference type="FunFam" id="2.30.39.10:FF:000001">
    <property type="entry name" value="Serpin family B member 2"/>
    <property type="match status" value="1"/>
</dbReference>
<dbReference type="Gene3D" id="2.30.39.10">
    <property type="entry name" value="Alpha-1-antitrypsin, domain 1"/>
    <property type="match status" value="1"/>
</dbReference>
<dbReference type="Gene3D" id="3.30.497.10">
    <property type="entry name" value="Antithrombin, subunit I, domain 2"/>
    <property type="match status" value="1"/>
</dbReference>
<dbReference type="InterPro" id="IPR023795">
    <property type="entry name" value="Serpin_CS"/>
</dbReference>
<dbReference type="InterPro" id="IPR023796">
    <property type="entry name" value="Serpin_dom"/>
</dbReference>
<dbReference type="InterPro" id="IPR000215">
    <property type="entry name" value="Serpin_fam"/>
</dbReference>
<dbReference type="InterPro" id="IPR036186">
    <property type="entry name" value="Serpin_sf"/>
</dbReference>
<dbReference type="InterPro" id="IPR042178">
    <property type="entry name" value="Serpin_sf_1"/>
</dbReference>
<dbReference type="InterPro" id="IPR042185">
    <property type="entry name" value="Serpin_sf_2"/>
</dbReference>
<dbReference type="PANTHER" id="PTHR11461">
    <property type="entry name" value="SERINE PROTEASE INHIBITOR, SERPIN"/>
    <property type="match status" value="1"/>
</dbReference>
<dbReference type="PANTHER" id="PTHR11461:SF186">
    <property type="entry name" value="SERPIN B4"/>
    <property type="match status" value="1"/>
</dbReference>
<dbReference type="Pfam" id="PF00079">
    <property type="entry name" value="Serpin"/>
    <property type="match status" value="1"/>
</dbReference>
<dbReference type="SMART" id="SM00093">
    <property type="entry name" value="SERPIN"/>
    <property type="match status" value="1"/>
</dbReference>
<dbReference type="SUPFAM" id="SSF56574">
    <property type="entry name" value="Serpins"/>
    <property type="match status" value="1"/>
</dbReference>
<dbReference type="PROSITE" id="PS00284">
    <property type="entry name" value="SERPIN"/>
    <property type="match status" value="1"/>
</dbReference>
<sequence>MDSISVTNAKFCFDVFNEMKVHHVNENILYCPLSILTALAMVYLGARGNTESQMKKVLHFDSITGAGSTTDSQCGSSEYVHNLFKELLSEITRPNATYSLEIADKLYVDKTFSVLPEYLSCARKFYTGGVEEVNFKTAAEEARQLINSWVEKETNGQIKDLLVSSSIDFGTTMVFINTIYFKGIWKIAFNTEDTREMPFSMTKEESKPVQMMCMNNSFNVATLPAEKMKILELPYASGDLSMLVLLPDEVSGLERIEKTINFDKLREWTSTNAMAKKSMKVYLPRMKIEEKYNLTSILMALGMTDLFSRSANLTGISSVDNLMISDAVHGVFMEVNEEGTEATGSTGAIGNIKHSLELEEFRADHPFLFFIRYNPTNAILFFGRYWSP</sequence>
<proteinExistence type="evidence at protein level"/>